<feature type="chain" id="PRO_0000261678" description="Large ribosomal subunit protein uL13">
    <location>
        <begin position="1"/>
        <end position="151"/>
    </location>
</feature>
<dbReference type="EMBL" id="BA000019">
    <property type="protein sequence ID" value="BAB75887.1"/>
    <property type="molecule type" value="Genomic_DNA"/>
</dbReference>
<dbReference type="PIR" id="AE2329">
    <property type="entry name" value="AE2329"/>
</dbReference>
<dbReference type="RefSeq" id="WP_010998327.1">
    <property type="nucleotide sequence ID" value="NC_003272.1"/>
</dbReference>
<dbReference type="SMR" id="Q8YPK6"/>
<dbReference type="STRING" id="103690.gene:10496237"/>
<dbReference type="KEGG" id="ana:all4188"/>
<dbReference type="eggNOG" id="COG0102">
    <property type="taxonomic scope" value="Bacteria"/>
</dbReference>
<dbReference type="OrthoDB" id="9801330at2"/>
<dbReference type="Proteomes" id="UP000002483">
    <property type="component" value="Chromosome"/>
</dbReference>
<dbReference type="GO" id="GO:0022625">
    <property type="term" value="C:cytosolic large ribosomal subunit"/>
    <property type="evidence" value="ECO:0007669"/>
    <property type="project" value="TreeGrafter"/>
</dbReference>
<dbReference type="GO" id="GO:0003729">
    <property type="term" value="F:mRNA binding"/>
    <property type="evidence" value="ECO:0007669"/>
    <property type="project" value="TreeGrafter"/>
</dbReference>
<dbReference type="GO" id="GO:0003735">
    <property type="term" value="F:structural constituent of ribosome"/>
    <property type="evidence" value="ECO:0007669"/>
    <property type="project" value="InterPro"/>
</dbReference>
<dbReference type="GO" id="GO:0017148">
    <property type="term" value="P:negative regulation of translation"/>
    <property type="evidence" value="ECO:0007669"/>
    <property type="project" value="TreeGrafter"/>
</dbReference>
<dbReference type="GO" id="GO:0006412">
    <property type="term" value="P:translation"/>
    <property type="evidence" value="ECO:0007669"/>
    <property type="project" value="UniProtKB-UniRule"/>
</dbReference>
<dbReference type="CDD" id="cd00392">
    <property type="entry name" value="Ribosomal_L13"/>
    <property type="match status" value="1"/>
</dbReference>
<dbReference type="FunFam" id="3.90.1180.10:FF:000001">
    <property type="entry name" value="50S ribosomal protein L13"/>
    <property type="match status" value="1"/>
</dbReference>
<dbReference type="Gene3D" id="3.90.1180.10">
    <property type="entry name" value="Ribosomal protein L13"/>
    <property type="match status" value="1"/>
</dbReference>
<dbReference type="HAMAP" id="MF_01366">
    <property type="entry name" value="Ribosomal_uL13"/>
    <property type="match status" value="1"/>
</dbReference>
<dbReference type="InterPro" id="IPR005822">
    <property type="entry name" value="Ribosomal_uL13"/>
</dbReference>
<dbReference type="InterPro" id="IPR005823">
    <property type="entry name" value="Ribosomal_uL13_bac-type"/>
</dbReference>
<dbReference type="InterPro" id="IPR023563">
    <property type="entry name" value="Ribosomal_uL13_CS"/>
</dbReference>
<dbReference type="InterPro" id="IPR036899">
    <property type="entry name" value="Ribosomal_uL13_sf"/>
</dbReference>
<dbReference type="NCBIfam" id="TIGR01066">
    <property type="entry name" value="rplM_bact"/>
    <property type="match status" value="1"/>
</dbReference>
<dbReference type="PANTHER" id="PTHR11545:SF2">
    <property type="entry name" value="LARGE RIBOSOMAL SUBUNIT PROTEIN UL13M"/>
    <property type="match status" value="1"/>
</dbReference>
<dbReference type="PANTHER" id="PTHR11545">
    <property type="entry name" value="RIBOSOMAL PROTEIN L13"/>
    <property type="match status" value="1"/>
</dbReference>
<dbReference type="Pfam" id="PF00572">
    <property type="entry name" value="Ribosomal_L13"/>
    <property type="match status" value="1"/>
</dbReference>
<dbReference type="PIRSF" id="PIRSF002181">
    <property type="entry name" value="Ribosomal_L13"/>
    <property type="match status" value="1"/>
</dbReference>
<dbReference type="SUPFAM" id="SSF52161">
    <property type="entry name" value="Ribosomal protein L13"/>
    <property type="match status" value="1"/>
</dbReference>
<dbReference type="PROSITE" id="PS00783">
    <property type="entry name" value="RIBOSOMAL_L13"/>
    <property type="match status" value="1"/>
</dbReference>
<keyword id="KW-1185">Reference proteome</keyword>
<keyword id="KW-0687">Ribonucleoprotein</keyword>
<keyword id="KW-0689">Ribosomal protein</keyword>
<proteinExistence type="inferred from homology"/>
<accession>Q8YPK6</accession>
<reference key="1">
    <citation type="journal article" date="2001" name="DNA Res.">
        <title>Complete genomic sequence of the filamentous nitrogen-fixing cyanobacterium Anabaena sp. strain PCC 7120.</title>
        <authorList>
            <person name="Kaneko T."/>
            <person name="Nakamura Y."/>
            <person name="Wolk C.P."/>
            <person name="Kuritz T."/>
            <person name="Sasamoto S."/>
            <person name="Watanabe A."/>
            <person name="Iriguchi M."/>
            <person name="Ishikawa A."/>
            <person name="Kawashima K."/>
            <person name="Kimura T."/>
            <person name="Kishida Y."/>
            <person name="Kohara M."/>
            <person name="Matsumoto M."/>
            <person name="Matsuno A."/>
            <person name="Muraki A."/>
            <person name="Nakazaki N."/>
            <person name="Shimpo S."/>
            <person name="Sugimoto M."/>
            <person name="Takazawa M."/>
            <person name="Yamada M."/>
            <person name="Yasuda M."/>
            <person name="Tabata S."/>
        </authorList>
    </citation>
    <scope>NUCLEOTIDE SEQUENCE [LARGE SCALE GENOMIC DNA]</scope>
    <source>
        <strain>PCC 7120 / SAG 25.82 / UTEX 2576</strain>
    </source>
</reference>
<organism>
    <name type="scientific">Nostoc sp. (strain PCC 7120 / SAG 25.82 / UTEX 2576)</name>
    <dbReference type="NCBI Taxonomy" id="103690"/>
    <lineage>
        <taxon>Bacteria</taxon>
        <taxon>Bacillati</taxon>
        <taxon>Cyanobacteriota</taxon>
        <taxon>Cyanophyceae</taxon>
        <taxon>Nostocales</taxon>
        <taxon>Nostocaceae</taxon>
        <taxon>Nostoc</taxon>
    </lineage>
</organism>
<comment type="function">
    <text evidence="1">This protein is one of the early assembly proteins of the 50S ribosomal subunit, although it is not seen to bind rRNA by itself. It is important during the early stages of 50S assembly.</text>
</comment>
<comment type="subunit">
    <text evidence="1">Part of the 50S ribosomal subunit.</text>
</comment>
<comment type="similarity">
    <text evidence="1">Belongs to the universal ribosomal protein uL13 family.</text>
</comment>
<gene>
    <name evidence="1" type="primary">rplM</name>
    <name evidence="1" type="synonym">rpl13</name>
    <name type="ordered locus">all4188</name>
</gene>
<evidence type="ECO:0000255" key="1">
    <source>
        <dbReference type="HAMAP-Rule" id="MF_01366"/>
    </source>
</evidence>
<evidence type="ECO:0000305" key="2"/>
<protein>
    <recommendedName>
        <fullName evidence="1">Large ribosomal subunit protein uL13</fullName>
    </recommendedName>
    <alternativeName>
        <fullName evidence="2">50S ribosomal protein L13</fullName>
    </alternativeName>
</protein>
<name>RL13_NOSS1</name>
<sequence length="151" mass="17034">MSKTYLPPQESLERDWYVVDATDKRLGRLASEIAMILRGKNKAHYTPHLDTGDFVIVVNAKKVAVTGKKRTQKLYRRHSGRPGGMKTETFAKLQQRLPERIVEHAVKGMLPKNSLGKQLFTKLKVYAGPTHPHDAQKPKELNIHTIPGAES</sequence>